<name>ELOF1_MOUSE</name>
<organism>
    <name type="scientific">Mus musculus</name>
    <name type="common">Mouse</name>
    <dbReference type="NCBI Taxonomy" id="10090"/>
    <lineage>
        <taxon>Eukaryota</taxon>
        <taxon>Metazoa</taxon>
        <taxon>Chordata</taxon>
        <taxon>Craniata</taxon>
        <taxon>Vertebrata</taxon>
        <taxon>Euteleostomi</taxon>
        <taxon>Mammalia</taxon>
        <taxon>Eutheria</taxon>
        <taxon>Euarchontoglires</taxon>
        <taxon>Glires</taxon>
        <taxon>Rodentia</taxon>
        <taxon>Myomorpha</taxon>
        <taxon>Muroidea</taxon>
        <taxon>Muridae</taxon>
        <taxon>Murinae</taxon>
        <taxon>Mus</taxon>
        <taxon>Mus</taxon>
    </lineage>
</organism>
<evidence type="ECO:0000250" key="1">
    <source>
        <dbReference type="UniProtKB" id="P60002"/>
    </source>
</evidence>
<evidence type="ECO:0000269" key="2">
    <source>
    </source>
</evidence>
<evidence type="ECO:0000269" key="3">
    <source ref="3"/>
</evidence>
<evidence type="ECO:0000303" key="4">
    <source>
    </source>
</evidence>
<evidence type="ECO:0000305" key="5"/>
<evidence type="ECO:0000312" key="6">
    <source>
        <dbReference type="MGI" id="MGI:1913376"/>
    </source>
</evidence>
<evidence type="ECO:0007744" key="7">
    <source>
        <dbReference type="PDB" id="1WII"/>
    </source>
</evidence>
<evidence type="ECO:0007829" key="8">
    <source>
        <dbReference type="PDB" id="1WII"/>
    </source>
</evidence>
<comment type="function">
    <text evidence="1">Factor involved in transcription-coupled nucleotide excision repair (TC-NER), a mechanism that rapidly removes RNA polymerase II-blocking lesions from the transcribed strand of active genes. Acts as a key adapter required to anchor TC-NER factors to RNA polymerase II: stably positions UVSSA and the DCX(ERCC8) complex (also named CSA complex) on arrested RNA polymerase II, leading to neddylation and activation of the DCX(ERCC8) complex and ubiquitination of RNA polymerase II.</text>
</comment>
<comment type="subunit">
    <text evidence="1">Associates with RNA polymerase II.</text>
</comment>
<comment type="subcellular location">
    <subcellularLocation>
        <location evidence="1">Nucleus</location>
    </subcellularLocation>
    <subcellularLocation>
        <location evidence="1">Chromosome</location>
    </subcellularLocation>
    <text evidence="1">Associates to RNA polymerase II (Pol II).</text>
</comment>
<comment type="disruption phenotype">
    <text evidence="2">Early embryonic lethality (PubMed:31276560). Developmental delay and defects during early development resulting in peri-gastrulation lethality (PubMed:31276560).</text>
</comment>
<comment type="similarity">
    <text evidence="5">Belongs to the ELOF1 family.</text>
</comment>
<sequence length="83" mass="9462">MGRRKSKRKPPPKKKMTGTLETQFTCPFCNHEKSCDVKMDRARNTGVISCTVCLEEFQTPITYLSEPVDVYSDWIDACEAANQ</sequence>
<feature type="chain" id="PRO_0000120942" description="Transcription elongation factor 1 homolog">
    <location>
        <begin position="1"/>
        <end position="83"/>
    </location>
</feature>
<feature type="binding site" evidence="3 7">
    <location>
        <position position="26"/>
    </location>
    <ligand>
        <name>Zn(2+)</name>
        <dbReference type="ChEBI" id="CHEBI:29105"/>
    </ligand>
</feature>
<feature type="binding site" evidence="3 7">
    <location>
        <position position="29"/>
    </location>
    <ligand>
        <name>Zn(2+)</name>
        <dbReference type="ChEBI" id="CHEBI:29105"/>
    </ligand>
</feature>
<feature type="binding site" evidence="3 7">
    <location>
        <position position="50"/>
    </location>
    <ligand>
        <name>Zn(2+)</name>
        <dbReference type="ChEBI" id="CHEBI:29105"/>
    </ligand>
</feature>
<feature type="binding site" evidence="3 7">
    <location>
        <position position="53"/>
    </location>
    <ligand>
        <name>Zn(2+)</name>
        <dbReference type="ChEBI" id="CHEBI:29105"/>
    </ligand>
</feature>
<feature type="turn" evidence="8">
    <location>
        <begin position="27"/>
        <end position="29"/>
    </location>
</feature>
<feature type="strand" evidence="8">
    <location>
        <begin position="35"/>
        <end position="40"/>
    </location>
</feature>
<feature type="turn" evidence="8">
    <location>
        <begin position="41"/>
        <end position="44"/>
    </location>
</feature>
<feature type="strand" evidence="8">
    <location>
        <begin position="45"/>
        <end position="53"/>
    </location>
</feature>
<feature type="strand" evidence="8">
    <location>
        <begin position="56"/>
        <end position="60"/>
    </location>
</feature>
<feature type="helix" evidence="8">
    <location>
        <begin position="69"/>
        <end position="79"/>
    </location>
</feature>
<gene>
    <name evidence="4 6" type="primary">Elof1</name>
</gene>
<keyword id="KW-0002">3D-structure</keyword>
<keyword id="KW-0158">Chromosome</keyword>
<keyword id="KW-0227">DNA damage</keyword>
<keyword id="KW-0234">DNA repair</keyword>
<keyword id="KW-0539">Nucleus</keyword>
<keyword id="KW-1185">Reference proteome</keyword>
<keyword id="KW-0862">Zinc</keyword>
<reference key="1">
    <citation type="journal article" date="2004" name="Genome Res.">
        <title>The status, quality, and expansion of the NIH full-length cDNA project: the Mammalian Gene Collection (MGC).</title>
        <authorList>
            <consortium name="The MGC Project Team"/>
        </authorList>
    </citation>
    <scope>NUCLEOTIDE SEQUENCE [LARGE SCALE MRNA]</scope>
    <source>
        <strain>C57BL/6J</strain>
        <strain>FVB/N</strain>
        <tissue>Colon</tissue>
        <tissue>Liver</tissue>
        <tissue>Mammary gland</tissue>
    </source>
</reference>
<reference key="2">
    <citation type="journal article" date="2019" name="PLoS ONE">
        <title>The elongation factor Elof1 is required for mammalian gastrulation.</title>
        <authorList>
            <person name="Tellier A.P."/>
            <person name="Archambault D."/>
            <person name="Tremblay K.D."/>
            <person name="Mager J."/>
        </authorList>
    </citation>
    <scope>DISRUPTION PHENOTYPE</scope>
</reference>
<reference key="3">
    <citation type="submission" date="2004-05" db="PDB data bank">
        <title>Solution structure of RSGI RUH-025, a DUF701 domain from mouse cDNA.</title>
        <authorList>
            <consortium name="RIKEN structural genomics initiative (RSGI)"/>
        </authorList>
    </citation>
    <scope>STRUCTURE BY NMR OF 8-79 IN COMPLEX WITH ZINC</scope>
    <scope>ZINC-BINDING SITES</scope>
</reference>
<dbReference type="EMBL" id="BC019870">
    <property type="protein sequence ID" value="AAH19870.3"/>
    <property type="molecule type" value="mRNA"/>
</dbReference>
<dbReference type="EMBL" id="BC024488">
    <property type="protein sequence ID" value="AAH24488.3"/>
    <property type="molecule type" value="mRNA"/>
</dbReference>
<dbReference type="EMBL" id="BC056225">
    <property type="protein sequence ID" value="AAH56225.1"/>
    <property type="molecule type" value="mRNA"/>
</dbReference>
<dbReference type="CCDS" id="CCDS40559.1"/>
<dbReference type="RefSeq" id="NP_001344238.1">
    <property type="nucleotide sequence ID" value="NM_001357309.1"/>
</dbReference>
<dbReference type="RefSeq" id="NP_001344239.1">
    <property type="nucleotide sequence ID" value="NM_001357310.1"/>
</dbReference>
<dbReference type="RefSeq" id="NP_001344240.1">
    <property type="nucleotide sequence ID" value="NM_001357311.1"/>
</dbReference>
<dbReference type="RefSeq" id="NP_001344241.1">
    <property type="nucleotide sequence ID" value="NM_001357312.1"/>
</dbReference>
<dbReference type="RefSeq" id="NP_001344242.1">
    <property type="nucleotide sequence ID" value="NM_001357313.1"/>
</dbReference>
<dbReference type="RefSeq" id="NP_001344243.1">
    <property type="nucleotide sequence ID" value="NM_001357314.1"/>
</dbReference>
<dbReference type="RefSeq" id="NP_740747.1">
    <property type="nucleotide sequence ID" value="NM_170777.4"/>
</dbReference>
<dbReference type="RefSeq" id="XP_017168995.1">
    <property type="nucleotide sequence ID" value="XM_017313506.1"/>
</dbReference>
<dbReference type="RefSeq" id="XP_017168996.1">
    <property type="nucleotide sequence ID" value="XM_017313507.1"/>
</dbReference>
<dbReference type="RefSeq" id="XP_017168997.1">
    <property type="nucleotide sequence ID" value="XM_017313508.1"/>
</dbReference>
<dbReference type="PDB" id="1WII">
    <property type="method" value="NMR"/>
    <property type="chains" value="A=8-79"/>
</dbReference>
<dbReference type="PDBsum" id="1WII"/>
<dbReference type="SMR" id="P60003"/>
<dbReference type="BioGRID" id="211234">
    <property type="interactions" value="1"/>
</dbReference>
<dbReference type="FunCoup" id="P60003">
    <property type="interactions" value="2063"/>
</dbReference>
<dbReference type="STRING" id="10090.ENSMUSP00000128173"/>
<dbReference type="PhosphoSitePlus" id="P60003"/>
<dbReference type="PaxDb" id="10090-ENSMUSP00000128173"/>
<dbReference type="PeptideAtlas" id="P60003"/>
<dbReference type="ProteomicsDB" id="275453"/>
<dbReference type="Pumba" id="P60003"/>
<dbReference type="Antibodypedia" id="13205">
    <property type="antibodies" value="85 antibodies from 24 providers"/>
</dbReference>
<dbReference type="DNASU" id="66126"/>
<dbReference type="Ensembl" id="ENSMUST00000013966.8">
    <property type="protein sequence ID" value="ENSMUSP00000013966.7"/>
    <property type="gene ID" value="ENSMUSG00000013822.8"/>
</dbReference>
<dbReference type="Ensembl" id="ENSMUST00000166335.2">
    <property type="protein sequence ID" value="ENSMUSP00000128173.2"/>
    <property type="gene ID" value="ENSMUSG00000013822.8"/>
</dbReference>
<dbReference type="Ensembl" id="ENSMUST00000213233.2">
    <property type="protein sequence ID" value="ENSMUSP00000150169.2"/>
    <property type="gene ID" value="ENSMUSG00000013822.8"/>
</dbReference>
<dbReference type="Ensembl" id="ENSMUST00000214394.2">
    <property type="protein sequence ID" value="ENSMUSP00000150536.2"/>
    <property type="gene ID" value="ENSMUSG00000013822.8"/>
</dbReference>
<dbReference type="Ensembl" id="ENSMUST00000216837.2">
    <property type="protein sequence ID" value="ENSMUSP00000149885.2"/>
    <property type="gene ID" value="ENSMUSG00000013822.8"/>
</dbReference>
<dbReference type="GeneID" id="66126"/>
<dbReference type="KEGG" id="mmu:66126"/>
<dbReference type="UCSC" id="uc009onw.1">
    <property type="organism name" value="mouse"/>
</dbReference>
<dbReference type="AGR" id="MGI:1913376"/>
<dbReference type="CTD" id="84337"/>
<dbReference type="MGI" id="MGI:1913376">
    <property type="gene designation" value="Elof1"/>
</dbReference>
<dbReference type="VEuPathDB" id="HostDB:ENSMUSG00000013822"/>
<dbReference type="eggNOG" id="KOG3214">
    <property type="taxonomic scope" value="Eukaryota"/>
</dbReference>
<dbReference type="GeneTree" id="ENSGT00390000000053"/>
<dbReference type="HOGENOM" id="CLU_105983_2_0_1"/>
<dbReference type="InParanoid" id="P60003"/>
<dbReference type="OMA" id="CLDANKK"/>
<dbReference type="OrthoDB" id="445983at2759"/>
<dbReference type="PhylomeDB" id="P60003"/>
<dbReference type="TreeFam" id="TF313731"/>
<dbReference type="BioGRID-ORCS" id="66126">
    <property type="hits" value="20 hits in 76 CRISPR screens"/>
</dbReference>
<dbReference type="ChiTaRS" id="Elof1">
    <property type="organism name" value="mouse"/>
</dbReference>
<dbReference type="EvolutionaryTrace" id="P60003"/>
<dbReference type="PRO" id="PR:P60003"/>
<dbReference type="Proteomes" id="UP000000589">
    <property type="component" value="Chromosome 9"/>
</dbReference>
<dbReference type="RNAct" id="P60003">
    <property type="molecule type" value="protein"/>
</dbReference>
<dbReference type="Bgee" id="ENSMUSG00000013822">
    <property type="expression patterns" value="Expressed in spermatid and 67 other cell types or tissues"/>
</dbReference>
<dbReference type="ExpressionAtlas" id="P60003">
    <property type="expression patterns" value="baseline and differential"/>
</dbReference>
<dbReference type="GO" id="GO:0005694">
    <property type="term" value="C:chromosome"/>
    <property type="evidence" value="ECO:0000250"/>
    <property type="project" value="UniProtKB"/>
</dbReference>
<dbReference type="GO" id="GO:0005634">
    <property type="term" value="C:nucleus"/>
    <property type="evidence" value="ECO:0000250"/>
    <property type="project" value="UniProtKB"/>
</dbReference>
<dbReference type="GO" id="GO:0030674">
    <property type="term" value="F:protein-macromolecule adaptor activity"/>
    <property type="evidence" value="ECO:0000250"/>
    <property type="project" value="UniProtKB"/>
</dbReference>
<dbReference type="GO" id="GO:0000993">
    <property type="term" value="F:RNA polymerase II complex binding"/>
    <property type="evidence" value="ECO:0000250"/>
    <property type="project" value="UniProtKB"/>
</dbReference>
<dbReference type="GO" id="GO:0008270">
    <property type="term" value="F:zinc ion binding"/>
    <property type="evidence" value="ECO:0007669"/>
    <property type="project" value="UniProtKB-KW"/>
</dbReference>
<dbReference type="GO" id="GO:0006283">
    <property type="term" value="P:transcription-coupled nucleotide-excision repair"/>
    <property type="evidence" value="ECO:0000250"/>
    <property type="project" value="UniProtKB"/>
</dbReference>
<dbReference type="FunFam" id="2.20.25.190:FF:000002">
    <property type="entry name" value="Transcription elongation factor 1 homolog"/>
    <property type="match status" value="1"/>
</dbReference>
<dbReference type="Gene3D" id="2.20.25.190">
    <property type="match status" value="1"/>
</dbReference>
<dbReference type="InterPro" id="IPR007808">
    <property type="entry name" value="Elf1"/>
</dbReference>
<dbReference type="InterPro" id="IPR038567">
    <property type="entry name" value="T_Elf1_sf"/>
</dbReference>
<dbReference type="PANTHER" id="PTHR20934">
    <property type="entry name" value="TRANSCRIPTION ELONGATION FACTOR 1 HOMOLOG"/>
    <property type="match status" value="1"/>
</dbReference>
<dbReference type="PANTHER" id="PTHR20934:SF0">
    <property type="entry name" value="TRANSCRIPTION ELONGATION FACTOR 1 HOMOLOG"/>
    <property type="match status" value="1"/>
</dbReference>
<dbReference type="Pfam" id="PF05129">
    <property type="entry name" value="Zn_ribbon_Elf1"/>
    <property type="match status" value="1"/>
</dbReference>
<dbReference type="SUPFAM" id="SSF57783">
    <property type="entry name" value="Zinc beta-ribbon"/>
    <property type="match status" value="1"/>
</dbReference>
<protein>
    <recommendedName>
        <fullName>Transcription elongation factor 1 homolog</fullName>
    </recommendedName>
</protein>
<accession>P60003</accession>
<accession>Q8R1J7</accession>
<accession>Q96II4</accession>
<proteinExistence type="evidence at protein level"/>